<proteinExistence type="inferred from homology"/>
<name>DEF_PARS2</name>
<sequence length="183" mass="20091">MSVRDIRLLGDPVLRTVADPVATFDRELRRLVDDLADTMRDAGGVGLAAPQLGVSLRIFTYLDDSDEVGHLINPVLGPFSEEMMDGEEGCLSLPGLAFDLRRPERVLAVGQNSHGDPVTVEGSGILSRCLQHETDHLDGILFIDRLDKETKRAAMKAIREAEWSNEPKPAVKVSPHPLFGRGR</sequence>
<organism>
    <name type="scientific">Parafrankia sp. (strain EAN1pec)</name>
    <dbReference type="NCBI Taxonomy" id="298653"/>
    <lineage>
        <taxon>Bacteria</taxon>
        <taxon>Bacillati</taxon>
        <taxon>Actinomycetota</taxon>
        <taxon>Actinomycetes</taxon>
        <taxon>Frankiales</taxon>
        <taxon>Frankiaceae</taxon>
        <taxon>Parafrankia</taxon>
    </lineage>
</organism>
<feature type="chain" id="PRO_1000097312" description="Peptide deformylase">
    <location>
        <begin position="1"/>
        <end position="183"/>
    </location>
</feature>
<feature type="active site" evidence="1">
    <location>
        <position position="133"/>
    </location>
</feature>
<feature type="binding site" evidence="1">
    <location>
        <position position="90"/>
    </location>
    <ligand>
        <name>Fe cation</name>
        <dbReference type="ChEBI" id="CHEBI:24875"/>
    </ligand>
</feature>
<feature type="binding site" evidence="1">
    <location>
        <position position="132"/>
    </location>
    <ligand>
        <name>Fe cation</name>
        <dbReference type="ChEBI" id="CHEBI:24875"/>
    </ligand>
</feature>
<feature type="binding site" evidence="1">
    <location>
        <position position="136"/>
    </location>
    <ligand>
        <name>Fe cation</name>
        <dbReference type="ChEBI" id="CHEBI:24875"/>
    </ligand>
</feature>
<accession>A8LE21</accession>
<reference key="1">
    <citation type="journal article" date="2007" name="Genome Res.">
        <title>Genome characteristics of facultatively symbiotic Frankia sp. strains reflect host range and host plant biogeography.</title>
        <authorList>
            <person name="Normand P."/>
            <person name="Lapierre P."/>
            <person name="Tisa L.S."/>
            <person name="Gogarten J.P."/>
            <person name="Alloisio N."/>
            <person name="Bagnarol E."/>
            <person name="Bassi C.A."/>
            <person name="Berry A.M."/>
            <person name="Bickhart D.M."/>
            <person name="Choisne N."/>
            <person name="Couloux A."/>
            <person name="Cournoyer B."/>
            <person name="Cruveiller S."/>
            <person name="Daubin V."/>
            <person name="Demange N."/>
            <person name="Francino M.P."/>
            <person name="Goltsman E."/>
            <person name="Huang Y."/>
            <person name="Kopp O.R."/>
            <person name="Labarre L."/>
            <person name="Lapidus A."/>
            <person name="Lavire C."/>
            <person name="Marechal J."/>
            <person name="Martinez M."/>
            <person name="Mastronunzio J.E."/>
            <person name="Mullin B.C."/>
            <person name="Niemann J."/>
            <person name="Pujic P."/>
            <person name="Rawnsley T."/>
            <person name="Rouy Z."/>
            <person name="Schenowitz C."/>
            <person name="Sellstedt A."/>
            <person name="Tavares F."/>
            <person name="Tomkins J.P."/>
            <person name="Vallenet D."/>
            <person name="Valverde C."/>
            <person name="Wall L.G."/>
            <person name="Wang Y."/>
            <person name="Medigue C."/>
            <person name="Benson D.R."/>
        </authorList>
    </citation>
    <scope>NUCLEOTIDE SEQUENCE [LARGE SCALE GENOMIC DNA]</scope>
    <source>
        <strain>EAN1pec</strain>
    </source>
</reference>
<protein>
    <recommendedName>
        <fullName evidence="1">Peptide deformylase</fullName>
        <shortName evidence="1">PDF</shortName>
        <ecNumber evidence="1">3.5.1.88</ecNumber>
    </recommendedName>
    <alternativeName>
        <fullName evidence="1">Polypeptide deformylase</fullName>
    </alternativeName>
</protein>
<evidence type="ECO:0000255" key="1">
    <source>
        <dbReference type="HAMAP-Rule" id="MF_00163"/>
    </source>
</evidence>
<keyword id="KW-0378">Hydrolase</keyword>
<keyword id="KW-0408">Iron</keyword>
<keyword id="KW-0479">Metal-binding</keyword>
<keyword id="KW-0648">Protein biosynthesis</keyword>
<gene>
    <name evidence="1" type="primary">def</name>
    <name type="ordered locus">Franean1_1718</name>
</gene>
<comment type="function">
    <text evidence="1">Removes the formyl group from the N-terminal Met of newly synthesized proteins. Requires at least a dipeptide for an efficient rate of reaction. N-terminal L-methionine is a prerequisite for activity but the enzyme has broad specificity at other positions.</text>
</comment>
<comment type="catalytic activity">
    <reaction evidence="1">
        <text>N-terminal N-formyl-L-methionyl-[peptide] + H2O = N-terminal L-methionyl-[peptide] + formate</text>
        <dbReference type="Rhea" id="RHEA:24420"/>
        <dbReference type="Rhea" id="RHEA-COMP:10639"/>
        <dbReference type="Rhea" id="RHEA-COMP:10640"/>
        <dbReference type="ChEBI" id="CHEBI:15377"/>
        <dbReference type="ChEBI" id="CHEBI:15740"/>
        <dbReference type="ChEBI" id="CHEBI:49298"/>
        <dbReference type="ChEBI" id="CHEBI:64731"/>
        <dbReference type="EC" id="3.5.1.88"/>
    </reaction>
</comment>
<comment type="cofactor">
    <cofactor evidence="1">
        <name>Fe(2+)</name>
        <dbReference type="ChEBI" id="CHEBI:29033"/>
    </cofactor>
    <text evidence="1">Binds 1 Fe(2+) ion.</text>
</comment>
<comment type="similarity">
    <text evidence="1">Belongs to the polypeptide deformylase family.</text>
</comment>
<dbReference type="EC" id="3.5.1.88" evidence="1"/>
<dbReference type="EMBL" id="CP000820">
    <property type="protein sequence ID" value="ABW11156.1"/>
    <property type="molecule type" value="Genomic_DNA"/>
</dbReference>
<dbReference type="RefSeq" id="WP_020459328.1">
    <property type="nucleotide sequence ID" value="NC_009921.1"/>
</dbReference>
<dbReference type="SMR" id="A8LE21"/>
<dbReference type="STRING" id="298653.Franean1_1718"/>
<dbReference type="KEGG" id="fre:Franean1_1718"/>
<dbReference type="eggNOG" id="COG0242">
    <property type="taxonomic scope" value="Bacteria"/>
</dbReference>
<dbReference type="HOGENOM" id="CLU_061901_1_2_11"/>
<dbReference type="GO" id="GO:0046872">
    <property type="term" value="F:metal ion binding"/>
    <property type="evidence" value="ECO:0007669"/>
    <property type="project" value="UniProtKB-KW"/>
</dbReference>
<dbReference type="GO" id="GO:0042586">
    <property type="term" value="F:peptide deformylase activity"/>
    <property type="evidence" value="ECO:0007669"/>
    <property type="project" value="UniProtKB-UniRule"/>
</dbReference>
<dbReference type="GO" id="GO:0043686">
    <property type="term" value="P:co-translational protein modification"/>
    <property type="evidence" value="ECO:0007669"/>
    <property type="project" value="TreeGrafter"/>
</dbReference>
<dbReference type="GO" id="GO:0006412">
    <property type="term" value="P:translation"/>
    <property type="evidence" value="ECO:0007669"/>
    <property type="project" value="UniProtKB-UniRule"/>
</dbReference>
<dbReference type="CDD" id="cd00487">
    <property type="entry name" value="Pep_deformylase"/>
    <property type="match status" value="1"/>
</dbReference>
<dbReference type="Gene3D" id="3.90.45.10">
    <property type="entry name" value="Peptide deformylase"/>
    <property type="match status" value="1"/>
</dbReference>
<dbReference type="HAMAP" id="MF_00163">
    <property type="entry name" value="Pep_deformylase"/>
    <property type="match status" value="1"/>
</dbReference>
<dbReference type="InterPro" id="IPR023635">
    <property type="entry name" value="Peptide_deformylase"/>
</dbReference>
<dbReference type="InterPro" id="IPR036821">
    <property type="entry name" value="Peptide_deformylase_sf"/>
</dbReference>
<dbReference type="NCBIfam" id="TIGR00079">
    <property type="entry name" value="pept_deformyl"/>
    <property type="match status" value="1"/>
</dbReference>
<dbReference type="NCBIfam" id="NF001159">
    <property type="entry name" value="PRK00150.1-3"/>
    <property type="match status" value="1"/>
</dbReference>
<dbReference type="PANTHER" id="PTHR10458">
    <property type="entry name" value="PEPTIDE DEFORMYLASE"/>
    <property type="match status" value="1"/>
</dbReference>
<dbReference type="PANTHER" id="PTHR10458:SF2">
    <property type="entry name" value="PEPTIDE DEFORMYLASE, MITOCHONDRIAL"/>
    <property type="match status" value="1"/>
</dbReference>
<dbReference type="Pfam" id="PF01327">
    <property type="entry name" value="Pep_deformylase"/>
    <property type="match status" value="1"/>
</dbReference>
<dbReference type="PIRSF" id="PIRSF004749">
    <property type="entry name" value="Pep_def"/>
    <property type="match status" value="1"/>
</dbReference>
<dbReference type="PRINTS" id="PR01576">
    <property type="entry name" value="PDEFORMYLASE"/>
</dbReference>
<dbReference type="SUPFAM" id="SSF56420">
    <property type="entry name" value="Peptide deformylase"/>
    <property type="match status" value="1"/>
</dbReference>